<organism>
    <name type="scientific">Flavobacterium psychrophilum (strain ATCC 49511 / DSM 21280 / CIP 103535 / JIP02/86)</name>
    <dbReference type="NCBI Taxonomy" id="402612"/>
    <lineage>
        <taxon>Bacteria</taxon>
        <taxon>Pseudomonadati</taxon>
        <taxon>Bacteroidota</taxon>
        <taxon>Flavobacteriia</taxon>
        <taxon>Flavobacteriales</taxon>
        <taxon>Flavobacteriaceae</taxon>
        <taxon>Flavobacterium</taxon>
    </lineage>
</organism>
<sequence length="713" mass="80756">MKYLKLFLLLFIIQTQAQQGGMWIPSLLSGMNETEMKNLGMKISADDIYSVNHSSLKDAVPHFNGGCTSEVISPKGLILTNHHCGFDAIQNHSSVDHDYLTNGFWAMKMEDELPNENLVVTFIVSINDVTAQVLDGVASITSETEKQNKIQENITKVTASFAKEAWQENKVRTFFEGNQYILFVTEVFKDVRLVGAPPSLIGKFGSDTDNWVWPRHTGDFSMFRVYANKNNHPAAYSKDNVPYIPKHFLPVSLDGVQEDDFTMVMGYPGKTQEYLPSFAVAQIVNETNPAKIEIREAALKVQDGFMRKDNAIKIQYASKYAGVANYWKKWIGESQGLKKSNAIGLKQNFEKDFQQKVIAAGKQNEYGNLLADFQKYYTEITPYAVSRDYFNEVVVKNTELLSLGYKLYQLEQVFITKGEQAFNDRKENLIKSQADFFKDFNATVDEKVFEQLVALYATKAPKEFLPISLLNVEYKKFAPSIYSKSKLVDYANFKALLSGDAKAVLKKISLDKGYAFVKSLADNYSKNIAPRYDEINLKINALQRIYMKAQLELYPNSRIFPDANSTLRVTYGKVKGYSPKDAIYYNPTTYLDGAIEKYIPGDYEFDVPKKLIDLYNNKDYGQYGENGKLPVCFIGTNHTTGGNSGSPAVDAQGNLIGLNFDRVWEGTMSDIHYDPSICRNVMVDMRYVLFIVDKFAGAKHLINEMKLVHPKKK</sequence>
<accession>A6GWM2</accession>
<proteinExistence type="evidence at protein level"/>
<protein>
    <recommendedName>
        <fullName evidence="5">Asp/Glu-specific dipeptidyl-peptidase</fullName>
        <ecNumber evidence="4">3.4.14.-</ecNumber>
    </recommendedName>
    <alternativeName>
        <fullName evidence="5">Dipeptidyl-peptidase 11</fullName>
        <shortName evidence="5">DPP11</shortName>
    </alternativeName>
</protein>
<comment type="function">
    <text evidence="4">Catalyzes the removal of dipeptides from the N-terminus of oligopeptides. Shows a strict specificity for acidic residues (Asp or Glu) in the P1 position, and has probably a hydrophobic residue preference at the P2 position. Preferentially cleaves the synthetic substrate Leu-Asp-methylcoumaryl-7-amide (Leu-Asp-MCA) as compared to Leu-Glu-MCA.</text>
</comment>
<comment type="similarity">
    <text evidence="6">Belongs to the peptidase S46 family.</text>
</comment>
<keyword id="KW-0002">3D-structure</keyword>
<keyword id="KW-0031">Aminopeptidase</keyword>
<keyword id="KW-0378">Hydrolase</keyword>
<keyword id="KW-0645">Protease</keyword>
<keyword id="KW-1185">Reference proteome</keyword>
<keyword id="KW-0720">Serine protease</keyword>
<keyword id="KW-0732">Signal</keyword>
<gene>
    <name type="primary">dpp11</name>
    <name evidence="7" type="ordered locus">FP0382</name>
</gene>
<reference key="1">
    <citation type="journal article" date="2007" name="Nat. Biotechnol.">
        <title>Complete genome sequence of the fish pathogen Flavobacterium psychrophilum.</title>
        <authorList>
            <person name="Duchaud E."/>
            <person name="Boussaha M."/>
            <person name="Loux V."/>
            <person name="Bernardet J.-F."/>
            <person name="Michel C."/>
            <person name="Kerouault B."/>
            <person name="Mondot S."/>
            <person name="Nicolas P."/>
            <person name="Bossy R."/>
            <person name="Caron C."/>
            <person name="Bessieres P."/>
            <person name="Gibrat J.-F."/>
            <person name="Claverol S."/>
            <person name="Dumetz F."/>
            <person name="Le Henaff M."/>
            <person name="Benmansour A."/>
        </authorList>
    </citation>
    <scope>NUCLEOTIDE SEQUENCE [LARGE SCALE GENOMIC DNA]</scope>
    <source>
        <strain>ATCC 49511 / DSM 21280 / CIP 103535 / JIP02/86</strain>
    </source>
</reference>
<reference key="2">
    <citation type="journal article" date="2013" name="Biochimie">
        <title>Discrimination based on Gly and Arg/Ser at position 673 between dipeptidyl-peptidase (DPP) 7 and DPP11, widely distributed DPPs in pathogenic and environmental gram-negative bacteria.</title>
        <authorList>
            <person name="Rouf S.M."/>
            <person name="Ohara-Nemoto Y."/>
            <person name="Hoshino T."/>
            <person name="Fujiwara T."/>
            <person name="Ono T."/>
            <person name="Nemoto T.K."/>
        </authorList>
    </citation>
    <scope>FUNCTION</scope>
    <scope>CATALYTIC ACTIVITY</scope>
    <scope>SUBSTRATE SPECIFICITY</scope>
    <source>
        <strain>ATCC 49418 / JCM 8519</strain>
    </source>
</reference>
<dbReference type="EC" id="3.4.14.-" evidence="4"/>
<dbReference type="EMBL" id="AM398681">
    <property type="protein sequence ID" value="CAL42495.1"/>
    <property type="molecule type" value="Genomic_DNA"/>
</dbReference>
<dbReference type="RefSeq" id="WP_011962553.1">
    <property type="nucleotide sequence ID" value="NC_009613.3"/>
</dbReference>
<dbReference type="RefSeq" id="YP_001295313.1">
    <property type="nucleotide sequence ID" value="NC_009613.3"/>
</dbReference>
<dbReference type="PDB" id="5JXF">
    <property type="method" value="X-ray"/>
    <property type="resolution" value="2.10 A"/>
    <property type="chains" value="A/B/C/D=18-713"/>
</dbReference>
<dbReference type="PDBsum" id="5JXF"/>
<dbReference type="SMR" id="A6GWM2"/>
<dbReference type="STRING" id="402612.FP0382"/>
<dbReference type="MEROPS" id="S46.002"/>
<dbReference type="EnsemblBacteria" id="CAL42495">
    <property type="protein sequence ID" value="CAL42495"/>
    <property type="gene ID" value="FP0382"/>
</dbReference>
<dbReference type="KEGG" id="fps:FP0382"/>
<dbReference type="PATRIC" id="fig|402612.5.peg.394"/>
<dbReference type="eggNOG" id="COG4717">
    <property type="taxonomic scope" value="Bacteria"/>
</dbReference>
<dbReference type="HOGENOM" id="CLU_013776_0_0_10"/>
<dbReference type="OrthoDB" id="9805367at2"/>
<dbReference type="Proteomes" id="UP000006394">
    <property type="component" value="Chromosome"/>
</dbReference>
<dbReference type="GO" id="GO:0008239">
    <property type="term" value="F:dipeptidyl-peptidase activity"/>
    <property type="evidence" value="ECO:0000314"/>
    <property type="project" value="UniProtKB"/>
</dbReference>
<dbReference type="GO" id="GO:0070009">
    <property type="term" value="F:serine-type aminopeptidase activity"/>
    <property type="evidence" value="ECO:0007669"/>
    <property type="project" value="InterPro"/>
</dbReference>
<dbReference type="GO" id="GO:0043171">
    <property type="term" value="P:peptide catabolic process"/>
    <property type="evidence" value="ECO:0000314"/>
    <property type="project" value="UniProtKB"/>
</dbReference>
<dbReference type="GO" id="GO:0006508">
    <property type="term" value="P:proteolysis"/>
    <property type="evidence" value="ECO:0007669"/>
    <property type="project" value="UniProtKB-KW"/>
</dbReference>
<dbReference type="InterPro" id="IPR019500">
    <property type="entry name" value="Pep_S46"/>
</dbReference>
<dbReference type="InterPro" id="IPR009003">
    <property type="entry name" value="Peptidase_S1_PA"/>
</dbReference>
<dbReference type="PANTHER" id="PTHR38469">
    <property type="entry name" value="PERIPLASMIC PEPTIDASE SUBFAMILY S1B"/>
    <property type="match status" value="1"/>
</dbReference>
<dbReference type="PANTHER" id="PTHR38469:SF1">
    <property type="entry name" value="PERIPLASMIC PEPTIDASE SUBFAMILY S1B"/>
    <property type="match status" value="1"/>
</dbReference>
<dbReference type="Pfam" id="PF10459">
    <property type="entry name" value="Peptidase_S46"/>
    <property type="match status" value="1"/>
</dbReference>
<dbReference type="SUPFAM" id="SSF50494">
    <property type="entry name" value="Trypsin-like serine proteases"/>
    <property type="match status" value="1"/>
</dbReference>
<name>DPP11_FLAPJ</name>
<evidence type="ECO:0000250" key="1">
    <source>
        <dbReference type="UniProtKB" id="B2RID1"/>
    </source>
</evidence>
<evidence type="ECO:0000250" key="2">
    <source>
        <dbReference type="UniProtKB" id="V5YM14"/>
    </source>
</evidence>
<evidence type="ECO:0000255" key="3"/>
<evidence type="ECO:0000269" key="4">
    <source>
    </source>
</evidence>
<evidence type="ECO:0000303" key="5">
    <source>
    </source>
</evidence>
<evidence type="ECO:0000305" key="6"/>
<evidence type="ECO:0000312" key="7">
    <source>
        <dbReference type="EMBL" id="CAL42495.1"/>
    </source>
</evidence>
<evidence type="ECO:0007829" key="8">
    <source>
        <dbReference type="PDB" id="5JXF"/>
    </source>
</evidence>
<feature type="signal peptide" evidence="3">
    <location>
        <begin position="1"/>
        <end position="17"/>
    </location>
</feature>
<feature type="chain" id="PRO_5002698278" description="Asp/Glu-specific dipeptidyl-peptidase">
    <location>
        <begin position="18"/>
        <end position="713"/>
    </location>
</feature>
<feature type="active site" description="Charge relay system" evidence="2">
    <location>
        <position position="83"/>
    </location>
</feature>
<feature type="active site" description="Charge relay system" evidence="2">
    <location>
        <position position="219"/>
    </location>
</feature>
<feature type="active site" description="Charge relay system" evidence="2">
    <location>
        <position position="644"/>
    </location>
</feature>
<feature type="site" description="Is essential for the Asp/Glu P1 specificity of DPP11; involved in the recognition of the Asp/Glu residue at the P1 position of substrate peptides" evidence="1">
    <location>
        <position position="662"/>
    </location>
</feature>
<feature type="helix" evidence="8">
    <location>
        <begin position="25"/>
        <end position="27"/>
    </location>
</feature>
<feature type="helix" evidence="8">
    <location>
        <begin position="31"/>
        <end position="39"/>
    </location>
</feature>
<feature type="helix" evidence="8">
    <location>
        <begin position="45"/>
        <end position="48"/>
    </location>
</feature>
<feature type="strand" evidence="8">
    <location>
        <begin position="51"/>
        <end position="53"/>
    </location>
</feature>
<feature type="helix" evidence="8">
    <location>
        <begin position="56"/>
        <end position="59"/>
    </location>
</feature>
<feature type="turn" evidence="8">
    <location>
        <begin position="64"/>
        <end position="66"/>
    </location>
</feature>
<feature type="strand" evidence="8">
    <location>
        <begin position="77"/>
        <end position="80"/>
    </location>
</feature>
<feature type="helix" evidence="8">
    <location>
        <begin position="82"/>
        <end position="91"/>
    </location>
</feature>
<feature type="strand" evidence="8">
    <location>
        <begin position="95"/>
        <end position="97"/>
    </location>
</feature>
<feature type="helix" evidence="8">
    <location>
        <begin position="99"/>
        <end position="102"/>
    </location>
</feature>
<feature type="helix" evidence="8">
    <location>
        <begin position="109"/>
        <end position="111"/>
    </location>
</feature>
<feature type="strand" evidence="8">
    <location>
        <begin position="120"/>
        <end position="128"/>
    </location>
</feature>
<feature type="helix" evidence="8">
    <location>
        <begin position="130"/>
        <end position="133"/>
    </location>
</feature>
<feature type="strand" evidence="8">
    <location>
        <begin position="138"/>
        <end position="141"/>
    </location>
</feature>
<feature type="helix" evidence="8">
    <location>
        <begin position="144"/>
        <end position="160"/>
    </location>
</feature>
<feature type="strand" evidence="8">
    <location>
        <begin position="168"/>
        <end position="174"/>
    </location>
</feature>
<feature type="helix" evidence="8">
    <location>
        <begin position="175"/>
        <end position="177"/>
    </location>
</feature>
<feature type="strand" evidence="8">
    <location>
        <begin position="179"/>
        <end position="188"/>
    </location>
</feature>
<feature type="strand" evidence="8">
    <location>
        <begin position="190"/>
        <end position="196"/>
    </location>
</feature>
<feature type="helix" evidence="8">
    <location>
        <begin position="199"/>
        <end position="202"/>
    </location>
</feature>
<feature type="turn" evidence="8">
    <location>
        <begin position="203"/>
        <end position="205"/>
    </location>
</feature>
<feature type="helix" evidence="8">
    <location>
        <begin position="206"/>
        <end position="209"/>
    </location>
</feature>
<feature type="strand" evidence="8">
    <location>
        <begin position="221"/>
        <end position="227"/>
    </location>
</feature>
<feature type="strand" evidence="8">
    <location>
        <begin position="251"/>
        <end position="254"/>
    </location>
</feature>
<feature type="strand" evidence="8">
    <location>
        <begin position="261"/>
        <end position="266"/>
    </location>
</feature>
<feature type="helix" evidence="8">
    <location>
        <begin position="277"/>
        <end position="285"/>
    </location>
</feature>
<feature type="helix" evidence="8">
    <location>
        <begin position="287"/>
        <end position="307"/>
    </location>
</feature>
<feature type="helix" evidence="8">
    <location>
        <begin position="310"/>
        <end position="339"/>
    </location>
</feature>
<feature type="helix" evidence="8">
    <location>
        <begin position="342"/>
        <end position="357"/>
    </location>
</feature>
<feature type="turn" evidence="8">
    <location>
        <begin position="358"/>
        <end position="361"/>
    </location>
</feature>
<feature type="turn" evidence="8">
    <location>
        <begin position="363"/>
        <end position="367"/>
    </location>
</feature>
<feature type="helix" evidence="8">
    <location>
        <begin position="368"/>
        <end position="393"/>
    </location>
</feature>
<feature type="turn" evidence="8">
    <location>
        <begin position="394"/>
        <end position="397"/>
    </location>
</feature>
<feature type="helix" evidence="8">
    <location>
        <begin position="399"/>
        <end position="417"/>
    </location>
</feature>
<feature type="helix" evidence="8">
    <location>
        <begin position="419"/>
        <end position="432"/>
    </location>
</feature>
<feature type="helix" evidence="8">
    <location>
        <begin position="434"/>
        <end position="438"/>
    </location>
</feature>
<feature type="helix" evidence="8">
    <location>
        <begin position="442"/>
        <end position="459"/>
    </location>
</feature>
<feature type="helix" evidence="8">
    <location>
        <begin position="462"/>
        <end position="464"/>
    </location>
</feature>
<feature type="turn" evidence="8">
    <location>
        <begin position="480"/>
        <end position="484"/>
    </location>
</feature>
<feature type="helix" evidence="8">
    <location>
        <begin position="490"/>
        <end position="496"/>
    </location>
</feature>
<feature type="helix" evidence="8">
    <location>
        <begin position="501"/>
        <end position="510"/>
    </location>
</feature>
<feature type="helix" evidence="8">
    <location>
        <begin position="512"/>
        <end position="527"/>
    </location>
</feature>
<feature type="helix" evidence="8">
    <location>
        <begin position="529"/>
        <end position="553"/>
    </location>
</feature>
<feature type="strand" evidence="8">
    <location>
        <begin position="568"/>
        <end position="574"/>
    </location>
</feature>
<feature type="strand" evidence="8">
    <location>
        <begin position="577"/>
        <end position="580"/>
    </location>
</feature>
<feature type="strand" evidence="8">
    <location>
        <begin position="583"/>
        <end position="585"/>
    </location>
</feature>
<feature type="strand" evidence="8">
    <location>
        <begin position="587"/>
        <end position="590"/>
    </location>
</feature>
<feature type="helix" evidence="8">
    <location>
        <begin position="591"/>
        <end position="597"/>
    </location>
</feature>
<feature type="turn" evidence="8">
    <location>
        <begin position="603"/>
        <end position="605"/>
    </location>
</feature>
<feature type="helix" evidence="8">
    <location>
        <begin position="609"/>
        <end position="617"/>
    </location>
</feature>
<feature type="helix" evidence="8">
    <location>
        <begin position="621"/>
        <end position="623"/>
    </location>
</feature>
<feature type="strand" evidence="8">
    <location>
        <begin position="630"/>
        <end position="636"/>
    </location>
</feature>
<feature type="strand" evidence="8">
    <location>
        <begin position="647"/>
        <end position="649"/>
    </location>
</feature>
<feature type="strand" evidence="8">
    <location>
        <begin position="655"/>
        <end position="662"/>
    </location>
</feature>
<feature type="helix" evidence="8">
    <location>
        <begin position="664"/>
        <end position="666"/>
    </location>
</feature>
<feature type="turn" evidence="8">
    <location>
        <begin position="667"/>
        <end position="671"/>
    </location>
</feature>
<feature type="turn" evidence="8">
    <location>
        <begin position="675"/>
        <end position="677"/>
    </location>
</feature>
<feature type="strand" evidence="8">
    <location>
        <begin position="680"/>
        <end position="684"/>
    </location>
</feature>
<feature type="helix" evidence="8">
    <location>
        <begin position="685"/>
        <end position="693"/>
    </location>
</feature>
<feature type="turn" evidence="8">
    <location>
        <begin position="694"/>
        <end position="696"/>
    </location>
</feature>
<feature type="helix" evidence="8">
    <location>
        <begin position="699"/>
        <end position="703"/>
    </location>
</feature>